<sequence>MDRRSRPQLGRRARHNYNDLCPPIGRRAATALLWLSCSIALLRALATSSTRAQQRAAAQRRTFLNAHHRSAAQVFPEPPESDHEDTDFEPSLPECPEYQEEEFDYESETESESEIESETEFETESDTAPTTEPETEPEDEPGPVVPKRPTFHQSLTERLSALRLRSPDASPSRAPPSTQESESPRQGEEPEDKDPRDPEESEEPKEEEKQQQHRCKPKKPTRRDPSPESPSKRGAIPIRRH</sequence>
<protein>
    <recommendedName>
        <fullName>Neuroendocrine secretory protein 55</fullName>
        <shortName>NESP55</shortName>
    </recommendedName>
    <component>
        <recommendedName>
            <fullName>LSAL tetrapeptide</fullName>
        </recommendedName>
    </component>
    <component>
        <recommendedName>
            <fullName>GAIPIRRH peptide</fullName>
        </recommendedName>
    </component>
</protein>
<accession>O18979</accession>
<feature type="signal peptide">
    <location>
        <begin position="1"/>
        <end position="46"/>
    </location>
</feature>
<feature type="chain" id="PRO_0000253976" description="Neuroendocrine secretory protein 55">
    <location>
        <begin position="47"/>
        <end position="241"/>
    </location>
</feature>
<feature type="peptide" id="PRO_0000253977" description="LSAL tetrapeptide" evidence="2 6">
    <location>
        <begin position="159"/>
        <end position="162"/>
    </location>
</feature>
<feature type="peptide" id="PRO_0000253978" description="GAIPIRRH peptide" evidence="2 6">
    <location>
        <begin position="234"/>
        <end position="241"/>
    </location>
</feature>
<feature type="region of interest" description="Disordered" evidence="3">
    <location>
        <begin position="71"/>
        <end position="241"/>
    </location>
</feature>
<feature type="compositionally biased region" description="Acidic residues" evidence="3">
    <location>
        <begin position="97"/>
        <end position="125"/>
    </location>
</feature>
<feature type="compositionally biased region" description="Low complexity" evidence="3">
    <location>
        <begin position="167"/>
        <end position="177"/>
    </location>
</feature>
<feature type="compositionally biased region" description="Basic and acidic residues" evidence="3">
    <location>
        <begin position="182"/>
        <end position="198"/>
    </location>
</feature>
<feature type="compositionally biased region" description="Basic residues" evidence="3">
    <location>
        <begin position="212"/>
        <end position="221"/>
    </location>
</feature>
<reference evidence="7 8" key="1">
    <citation type="journal article" date="1997" name="J. Biol. Chem.">
        <title>Molecular cloning and characterization of NESP55, a novel chromogranin-like precursor of a peptide with 5-HT1B receptor antagonist activity.</title>
        <authorList>
            <person name="Ischia R."/>
            <person name="Lovisetti-Scamihorn P."/>
            <person name="Hogue-Angeletti R."/>
            <person name="Wolkersdorfer M."/>
            <person name="Winkler H."/>
            <person name="Fischer-Colbrie R."/>
        </authorList>
    </citation>
    <scope>NUCLEOTIDE SEQUENCE [MRNA]</scope>
    <scope>SUBCELLULAR LOCATION</scope>
    <scope>TISSUE SPECIFICITY</scope>
</reference>
<reference evidence="7" key="2">
    <citation type="journal article" date="2000" name="Neuroendocrinology">
        <title>Neuroendocrine secretory protein 55 (NESP55): alternative splicing onto transcripts of the GNAS gene and posttranslational processing of a maternally expressed protein.</title>
        <authorList>
            <person name="Weiss U."/>
            <person name="Ischia R."/>
            <person name="Eder S."/>
            <person name="Lovisetti-Scamihorn P."/>
            <person name="Bauer R."/>
            <person name="Fischer-Colbrie R."/>
        </authorList>
    </citation>
    <scope>KERATAN SULFATE ATTACHMENT</scope>
</reference>
<reference key="3">
    <citation type="journal article" date="2004" name="NeuroSignals">
        <title>Secretion and molecular forms of NESP55, a novel genomically imprinted neuroendocrine-specific protein from AtT-20 cells.</title>
        <authorList>
            <person name="Eder S."/>
            <person name="Leierer J."/>
            <person name="Klimaschewski L."/>
            <person name="Wilhelm A."/>
            <person name="Volknandt W."/>
            <person name="Laslop A."/>
            <person name="Fischer-Colbrie R."/>
        </authorList>
    </citation>
    <scope>SIGNAL SEQUENCE</scope>
    <scope>SUBCELLULAR LOCATION</scope>
    <scope>C-TERMINAL PEPTIDE</scope>
</reference>
<organism>
    <name type="scientific">Bos taurus</name>
    <name type="common">Bovine</name>
    <dbReference type="NCBI Taxonomy" id="9913"/>
    <lineage>
        <taxon>Eukaryota</taxon>
        <taxon>Metazoa</taxon>
        <taxon>Chordata</taxon>
        <taxon>Craniata</taxon>
        <taxon>Vertebrata</taxon>
        <taxon>Euteleostomi</taxon>
        <taxon>Mammalia</taxon>
        <taxon>Eutheria</taxon>
        <taxon>Laurasiatheria</taxon>
        <taxon>Artiodactyla</taxon>
        <taxon>Ruminantia</taxon>
        <taxon>Pecora</taxon>
        <taxon>Bovidae</taxon>
        <taxon>Bovinae</taxon>
        <taxon>Bos</taxon>
    </lineage>
</organism>
<comment type="subcellular location">
    <subcellularLocation>
        <location>Cytoplasmic vesicle</location>
        <location>Secretory vesicle</location>
    </subcellularLocation>
    <subcellularLocation>
        <location>Secreted</location>
    </subcellularLocation>
    <text>Neuroendocrine secretory granules.</text>
</comment>
<comment type="alternative products">
    <event type="alternative splicing"/>
    <isoform>
        <id>O18979-1</id>
        <name evidence="5">Nesp55</name>
        <sequence type="displayed"/>
    </isoform>
    <isoform>
        <id>P04896-1</id>
        <name evidence="7">Gnas-1</name>
        <name evidence="7">Alpha-S2</name>
        <sequence type="external"/>
    </isoform>
    <isoform>
        <id>P04896-2</id>
        <name evidence="7">Gnas-2</name>
        <name evidence="7">Alpha-S1</name>
        <sequence type="external"/>
    </isoform>
</comment>
<comment type="tissue specificity">
    <text evidence="5">Highly expressed in adrenal medulla and anterior and posterior pituitary. In the brain, detected in hypothalamus, hippocampus, caudate nucleus, thalamus and, in significantly lower amounts, in the cerebellum.</text>
</comment>
<comment type="PTM">
    <text evidence="4">Binds keratan sulfate chains.</text>
</comment>
<comment type="PTM">
    <text evidence="5">May be proteolytically processed to give rise to a number of active peptides.</text>
</comment>
<comment type="miscellaneous">
    <text evidence="7">This protein is produced by a bicistronic gene which also produces the ALEX protein from an overlapping reading frame.</text>
</comment>
<comment type="miscellaneous">
    <text evidence="7">The GNAS locus is imprinted in a complex manner, giving rise to distinct paternally, maternally and biallelically expressed proteins.</text>
</comment>
<comment type="miscellaneous">
    <molecule>Isoform Nesp55</molecule>
    <text>Shares no sequence similarity with other isoforms due to a novel first exon containing the entire reading frame spliced to shared exon 2 so that exons 2-13 make up the 3'-UTR.</text>
</comment>
<comment type="similarity">
    <text evidence="2">Belongs to the NESP55 family.</text>
</comment>
<dbReference type="EMBL" id="U77614">
    <property type="protein sequence ID" value="AAC48752.1"/>
    <property type="molecule type" value="mRNA"/>
</dbReference>
<dbReference type="RefSeq" id="NP_001258700.1">
    <molecule id="O18979-1"/>
    <property type="nucleotide sequence ID" value="NM_001271771.1"/>
</dbReference>
<dbReference type="SMR" id="O18979"/>
<dbReference type="FunCoup" id="O18979">
    <property type="interactions" value="401"/>
</dbReference>
<dbReference type="STRING" id="9913.ENSBTAP00000023246"/>
<dbReference type="PaxDb" id="9913-ENSBTAP00000055023"/>
<dbReference type="GeneID" id="281793"/>
<dbReference type="KEGG" id="bta:281793"/>
<dbReference type="CTD" id="2778"/>
<dbReference type="eggNOG" id="ENOG502RNKH">
    <property type="taxonomic scope" value="Eukaryota"/>
</dbReference>
<dbReference type="HOGENOM" id="CLU_100255_0_0_1"/>
<dbReference type="InParanoid" id="O18979"/>
<dbReference type="OrthoDB" id="5817230at2759"/>
<dbReference type="TreeFam" id="TF350423"/>
<dbReference type="Proteomes" id="UP000009136">
    <property type="component" value="Unplaced"/>
</dbReference>
<dbReference type="GO" id="GO:0005576">
    <property type="term" value="C:extracellular region"/>
    <property type="evidence" value="ECO:0007669"/>
    <property type="project" value="UniProtKB-SubCell"/>
</dbReference>
<dbReference type="GO" id="GO:0030133">
    <property type="term" value="C:transport vesicle"/>
    <property type="evidence" value="ECO:0007669"/>
    <property type="project" value="UniProtKB-SubCell"/>
</dbReference>
<dbReference type="GO" id="GO:0040015">
    <property type="term" value="P:negative regulation of multicellular organism growth"/>
    <property type="evidence" value="ECO:0000250"/>
    <property type="project" value="CAFA"/>
</dbReference>
<dbReference type="GO" id="GO:0071107">
    <property type="term" value="P:response to parathyroid hormone"/>
    <property type="evidence" value="ECO:0007669"/>
    <property type="project" value="InterPro"/>
</dbReference>
<dbReference type="InterPro" id="IPR009434">
    <property type="entry name" value="NESP55"/>
</dbReference>
<dbReference type="Pfam" id="PF06390">
    <property type="entry name" value="NESP55"/>
    <property type="match status" value="1"/>
</dbReference>
<evidence type="ECO:0000250" key="1">
    <source>
        <dbReference type="UniProtKB" id="O95467"/>
    </source>
</evidence>
<evidence type="ECO:0000255" key="2"/>
<evidence type="ECO:0000256" key="3">
    <source>
        <dbReference type="SAM" id="MobiDB-lite"/>
    </source>
</evidence>
<evidence type="ECO:0000269" key="4">
    <source>
    </source>
</evidence>
<evidence type="ECO:0000269" key="5">
    <source>
    </source>
</evidence>
<evidence type="ECO:0000303" key="6">
    <source>
    </source>
</evidence>
<evidence type="ECO:0000305" key="7"/>
<evidence type="ECO:0000312" key="8">
    <source>
        <dbReference type="EMBL" id="AAC48752.1"/>
    </source>
</evidence>
<keyword id="KW-0025">Alternative splicing</keyword>
<keyword id="KW-0165">Cleavage on pair of basic residues</keyword>
<keyword id="KW-0968">Cytoplasmic vesicle</keyword>
<keyword id="KW-0325">Glycoprotein</keyword>
<keyword id="KW-0654">Proteoglycan</keyword>
<keyword id="KW-1185">Reference proteome</keyword>
<keyword id="KW-0964">Secreted</keyword>
<keyword id="KW-0732">Signal</keyword>
<name>GNAS3_BOVIN</name>
<gene>
    <name evidence="1" type="primary">GNAS</name>
    <name evidence="1" type="synonym">GNAS1</name>
</gene>
<proteinExistence type="evidence at transcript level"/>